<organism>
    <name type="scientific">Staphylococcus aureus (strain bovine RF122 / ET3-1)</name>
    <dbReference type="NCBI Taxonomy" id="273036"/>
    <lineage>
        <taxon>Bacteria</taxon>
        <taxon>Bacillati</taxon>
        <taxon>Bacillota</taxon>
        <taxon>Bacilli</taxon>
        <taxon>Bacillales</taxon>
        <taxon>Staphylococcaceae</taxon>
        <taxon>Staphylococcus</taxon>
    </lineage>
</organism>
<accession>Q2YU51</accession>
<sequence length="485" mass="52869">MSIRYESVENLLTLIKDKKIKPSDVVKDVYDAIEETDPTIKSFLALDKENAIKKAQELDELQAKDQMDGKLFGIPMGIKDNIITNGLETTCASKMLEEFVPIYESTVMEKLHNENAVLIGKLNMDEFAMGGSTETSYFKKTVNPFDHKAVPGGSSGGSAAAVAAGLVPFSLGSDTGGSIRQPAAYCGVVGMKPTYGRVSRFGLVAFASSLDQIGPLTRNVKDNAIVLEAISGADVNDSTSASVDDVDFTSEIGKDIKGLKVALPKEYLGEGVADDVKEAVQNAVETLKSLGAVVEEVSLPNTKFGIPSYYVIASSEASSNLSRFDGIRYGYHSKEAHSLEELYKMSRSEGFGKEVKRRIFLGTFALSSGYYDAYYKKSQKVRTLIKNDFDKVFENYDVVVGPTAPTTAFNLGEEIDDPLTMYANDLLTTPVNLAGLPGISVPCGQSNGRPIGLQFIGKPFDEKTLYRVAYQYETQYNLHDVYEKL</sequence>
<feature type="chain" id="PRO_0000241155" description="Glutamyl-tRNA(Gln) amidotransferase subunit A">
    <location>
        <begin position="1"/>
        <end position="485"/>
    </location>
</feature>
<feature type="active site" description="Charge relay system" evidence="1">
    <location>
        <position position="79"/>
    </location>
</feature>
<feature type="active site" description="Charge relay system" evidence="1">
    <location>
        <position position="154"/>
    </location>
</feature>
<feature type="active site" description="Acyl-ester intermediate" evidence="1">
    <location>
        <position position="178"/>
    </location>
</feature>
<gene>
    <name evidence="1" type="primary">gatA</name>
    <name type="ordered locus">SAB1833c</name>
</gene>
<comment type="function">
    <text evidence="1">Allows the formation of correctly charged Gln-tRNA(Gln) through the transamidation of misacylated Glu-tRNA(Gln) in organisms which lack glutaminyl-tRNA synthetase. The reaction takes place in the presence of glutamine and ATP through an activated gamma-phospho-Glu-tRNA(Gln).</text>
</comment>
<comment type="catalytic activity">
    <reaction evidence="1">
        <text>L-glutamyl-tRNA(Gln) + L-glutamine + ATP + H2O = L-glutaminyl-tRNA(Gln) + L-glutamate + ADP + phosphate + H(+)</text>
        <dbReference type="Rhea" id="RHEA:17521"/>
        <dbReference type="Rhea" id="RHEA-COMP:9681"/>
        <dbReference type="Rhea" id="RHEA-COMP:9684"/>
        <dbReference type="ChEBI" id="CHEBI:15377"/>
        <dbReference type="ChEBI" id="CHEBI:15378"/>
        <dbReference type="ChEBI" id="CHEBI:29985"/>
        <dbReference type="ChEBI" id="CHEBI:30616"/>
        <dbReference type="ChEBI" id="CHEBI:43474"/>
        <dbReference type="ChEBI" id="CHEBI:58359"/>
        <dbReference type="ChEBI" id="CHEBI:78520"/>
        <dbReference type="ChEBI" id="CHEBI:78521"/>
        <dbReference type="ChEBI" id="CHEBI:456216"/>
        <dbReference type="EC" id="6.3.5.7"/>
    </reaction>
</comment>
<comment type="subunit">
    <text evidence="1">Heterotrimer of A, B and C subunits.</text>
</comment>
<comment type="similarity">
    <text evidence="1">Belongs to the amidase family. GatA subfamily.</text>
</comment>
<dbReference type="EC" id="6.3.5.7" evidence="1"/>
<dbReference type="EMBL" id="AJ938182">
    <property type="protein sequence ID" value="CAI81522.1"/>
    <property type="molecule type" value="Genomic_DNA"/>
</dbReference>
<dbReference type="RefSeq" id="WP_000027930.1">
    <property type="nucleotide sequence ID" value="NC_007622.1"/>
</dbReference>
<dbReference type="SMR" id="Q2YU51"/>
<dbReference type="KEGG" id="sab:SAB1833c"/>
<dbReference type="HOGENOM" id="CLU_009600_0_3_9"/>
<dbReference type="GO" id="GO:0030956">
    <property type="term" value="C:glutamyl-tRNA(Gln) amidotransferase complex"/>
    <property type="evidence" value="ECO:0007669"/>
    <property type="project" value="InterPro"/>
</dbReference>
<dbReference type="GO" id="GO:0005524">
    <property type="term" value="F:ATP binding"/>
    <property type="evidence" value="ECO:0007669"/>
    <property type="project" value="UniProtKB-KW"/>
</dbReference>
<dbReference type="GO" id="GO:0050567">
    <property type="term" value="F:glutaminyl-tRNA synthase (glutamine-hydrolyzing) activity"/>
    <property type="evidence" value="ECO:0007669"/>
    <property type="project" value="UniProtKB-UniRule"/>
</dbReference>
<dbReference type="GO" id="GO:0006412">
    <property type="term" value="P:translation"/>
    <property type="evidence" value="ECO:0007669"/>
    <property type="project" value="UniProtKB-UniRule"/>
</dbReference>
<dbReference type="Gene3D" id="3.90.1300.10">
    <property type="entry name" value="Amidase signature (AS) domain"/>
    <property type="match status" value="1"/>
</dbReference>
<dbReference type="HAMAP" id="MF_00120">
    <property type="entry name" value="GatA"/>
    <property type="match status" value="1"/>
</dbReference>
<dbReference type="InterPro" id="IPR000120">
    <property type="entry name" value="Amidase"/>
</dbReference>
<dbReference type="InterPro" id="IPR020556">
    <property type="entry name" value="Amidase_CS"/>
</dbReference>
<dbReference type="InterPro" id="IPR023631">
    <property type="entry name" value="Amidase_dom"/>
</dbReference>
<dbReference type="InterPro" id="IPR036928">
    <property type="entry name" value="AS_sf"/>
</dbReference>
<dbReference type="InterPro" id="IPR004412">
    <property type="entry name" value="GatA"/>
</dbReference>
<dbReference type="NCBIfam" id="TIGR00132">
    <property type="entry name" value="gatA"/>
    <property type="match status" value="1"/>
</dbReference>
<dbReference type="PANTHER" id="PTHR11895:SF151">
    <property type="entry name" value="GLUTAMYL-TRNA(GLN) AMIDOTRANSFERASE SUBUNIT A"/>
    <property type="match status" value="1"/>
</dbReference>
<dbReference type="PANTHER" id="PTHR11895">
    <property type="entry name" value="TRANSAMIDASE"/>
    <property type="match status" value="1"/>
</dbReference>
<dbReference type="Pfam" id="PF01425">
    <property type="entry name" value="Amidase"/>
    <property type="match status" value="1"/>
</dbReference>
<dbReference type="SUPFAM" id="SSF75304">
    <property type="entry name" value="Amidase signature (AS) enzymes"/>
    <property type="match status" value="1"/>
</dbReference>
<dbReference type="PROSITE" id="PS00571">
    <property type="entry name" value="AMIDASES"/>
    <property type="match status" value="1"/>
</dbReference>
<proteinExistence type="inferred from homology"/>
<protein>
    <recommendedName>
        <fullName evidence="1">Glutamyl-tRNA(Gln) amidotransferase subunit A</fullName>
        <shortName evidence="1">Glu-ADT subunit A</shortName>
        <ecNumber evidence="1">6.3.5.7</ecNumber>
    </recommendedName>
</protein>
<keyword id="KW-0067">ATP-binding</keyword>
<keyword id="KW-0436">Ligase</keyword>
<keyword id="KW-0547">Nucleotide-binding</keyword>
<keyword id="KW-0648">Protein biosynthesis</keyword>
<reference key="1">
    <citation type="journal article" date="2007" name="PLoS ONE">
        <title>Molecular correlates of host specialization in Staphylococcus aureus.</title>
        <authorList>
            <person name="Herron-Olson L."/>
            <person name="Fitzgerald J.R."/>
            <person name="Musser J.M."/>
            <person name="Kapur V."/>
        </authorList>
    </citation>
    <scope>NUCLEOTIDE SEQUENCE [LARGE SCALE GENOMIC DNA]</scope>
    <source>
        <strain>bovine RF122 / ET3-1</strain>
    </source>
</reference>
<evidence type="ECO:0000255" key="1">
    <source>
        <dbReference type="HAMAP-Rule" id="MF_00120"/>
    </source>
</evidence>
<name>GATA_STAAB</name>